<dbReference type="EC" id="2.1.1.-" evidence="2"/>
<dbReference type="EMBL" id="OQ091242">
    <property type="protein sequence ID" value="WCJ12487.1"/>
    <property type="molecule type" value="mRNA"/>
</dbReference>
<dbReference type="EMBL" id="KK785516">
    <property type="protein sequence ID" value="KDO42120.1"/>
    <property type="status" value="ALT_SEQ"/>
    <property type="molecule type" value="Genomic_DNA"/>
</dbReference>
<dbReference type="SMR" id="A0A067DKP1"/>
<dbReference type="STRING" id="2711.A0A067DKP1"/>
<dbReference type="UniPathway" id="UPA00213"/>
<dbReference type="Proteomes" id="UP000027120">
    <property type="component" value="Unassembled WGS sequence"/>
</dbReference>
<dbReference type="GO" id="GO:0016746">
    <property type="term" value="F:acyltransferase activity"/>
    <property type="evidence" value="ECO:0007669"/>
    <property type="project" value="UniProtKB-KW"/>
</dbReference>
<dbReference type="GO" id="GO:0016491">
    <property type="term" value="F:oxidoreductase activity"/>
    <property type="evidence" value="ECO:0007669"/>
    <property type="project" value="UniProtKB-KW"/>
</dbReference>
<dbReference type="Gene3D" id="3.30.559.10">
    <property type="entry name" value="Chloramphenicol acetyltransferase-like domain"/>
    <property type="match status" value="2"/>
</dbReference>
<dbReference type="InterPro" id="IPR023213">
    <property type="entry name" value="CAT-like_dom_sf"/>
</dbReference>
<dbReference type="PANTHER" id="PTHR31623:SF28">
    <property type="entry name" value="BAHD ACYLTRANSFERASE"/>
    <property type="match status" value="1"/>
</dbReference>
<dbReference type="PANTHER" id="PTHR31623">
    <property type="entry name" value="F21J9.9"/>
    <property type="match status" value="1"/>
</dbReference>
<dbReference type="Pfam" id="PF02458">
    <property type="entry name" value="Transferase"/>
    <property type="match status" value="1"/>
</dbReference>
<comment type="function">
    <text evidence="2">Acetyltransferase involved in the biosynthesis of limonoids triterpene natural products such as limonin, a compound with insecticidal activity responsible for the bitter taste in citrus (PubMed:36701471). Catalyzes the formation of (1S)-1-acetoxy-luvungin A from (1S)-1-hydroxy-luvungin A (PubMed:36701471).</text>
</comment>
<comment type="catalytic activity">
    <reaction evidence="2">
        <text>(1S)-1-hydroxy-luvungin A + acetyl-CoA = (1S)-1-acetoxy-luvungin A + CoA</text>
        <dbReference type="Rhea" id="RHEA:80323"/>
        <dbReference type="ChEBI" id="CHEBI:57287"/>
        <dbReference type="ChEBI" id="CHEBI:57288"/>
        <dbReference type="ChEBI" id="CHEBI:231477"/>
        <dbReference type="ChEBI" id="CHEBI:231478"/>
    </reaction>
    <physiologicalReaction direction="left-to-right" evidence="2">
        <dbReference type="Rhea" id="RHEA:80324"/>
    </physiologicalReaction>
</comment>
<comment type="pathway">
    <text evidence="2">Secondary metabolite biosynthesis; terpenoid biosynthesis.</text>
</comment>
<comment type="subunit">
    <text evidence="1">Monomer.</text>
</comment>
<comment type="similarity">
    <text evidence="4">Belongs to the plant acyltransferase family.</text>
</comment>
<comment type="sequence caution" evidence="4">
    <conflict type="frameshift">
        <sequence resource="EMBL-CDS" id="KDO42120"/>
    </conflict>
</comment>
<sequence>MEINNVSSEIIKPSSPTPQHLKTHKLSVLDQVAGDSLFPIILFYPQTCSNNTSLNKTSDLLKRSLSQTLTLYHPFAGRLKDEFSIDCDDTGATFIEARAAASDMSEIVKQPTVDMLEQLMPYKLNEKPSVAVNLAAKVTYFEHCGGMALCVCFSHVIADITTAANFIKTWVTFASGSDTSSEDDDVIKHAVFGCSSIFPPQKFSSFSRNVISENHSNSAEILTKRFIFDGDKIAALKEKMGSESSSGYHPTRVEAVSAIILGGIMSVEKQADDFNHSHLVASIAVNLRNRVNPPIPEQSIGNIVQAGIAKLPIEKKTIDYRNLAETLHKSIEKINDEYLRKFHADGGFLSNMNDVLEGLFDKNCRWFTISAWCRRPLYEADFGWGKPAWVSTVMKHKDVAVLLDSSDGKGIEAWVALPKKDMAKFEQDSGILRYASIDTSLI</sequence>
<feature type="chain" id="PRO_0000461344" description="Limonoid 1-O-acetyltransferse">
    <location>
        <begin position="1"/>
        <end position="442"/>
    </location>
</feature>
<feature type="active site" description="Proton acceptor" evidence="1">
    <location>
        <position position="155"/>
    </location>
</feature>
<feature type="active site" description="Proton acceptor" evidence="1">
    <location>
        <position position="381"/>
    </location>
</feature>
<feature type="sequence conflict" description="In Ref. 1; WCJ12487." evidence="4" ref="1">
    <original>S</original>
    <variation>T</variation>
    <location>
        <position position="58"/>
    </location>
</feature>
<feature type="sequence conflict" description="In Ref. 1; WCJ12487." evidence="4" ref="1">
    <original>T</original>
    <variation>I</variation>
    <location>
        <position position="93"/>
    </location>
</feature>
<feature type="sequence conflict" description="In Ref. 1; WCJ12487." evidence="4" ref="1">
    <original>SENHSN</original>
    <variation>AENLSK</variation>
    <location>
        <begin position="212"/>
        <end position="217"/>
    </location>
</feature>
<feature type="sequence conflict" description="In Ref. 1; WCJ12487." evidence="4" ref="1">
    <original>D</original>
    <variation>E</variation>
    <location>
        <position position="229"/>
    </location>
</feature>
<feature type="sequence conflict" description="In Ref. 1; WCJ12487." evidence="4" ref="1">
    <original>Q</original>
    <variation>E</variation>
    <location>
        <position position="270"/>
    </location>
</feature>
<feature type="sequence conflict" description="In Ref. 1; WCJ12487." evidence="4" ref="1">
    <original>A</original>
    <variation>V</variation>
    <location>
        <position position="388"/>
    </location>
</feature>
<gene>
    <name evidence="3" type="primary">L1AT</name>
    <name evidence="5" type="ORF">CISIN_1g036438mg</name>
</gene>
<organism>
    <name type="scientific">Citrus sinensis</name>
    <name type="common">Sweet orange</name>
    <name type="synonym">Citrus aurantium var. sinensis</name>
    <dbReference type="NCBI Taxonomy" id="2711"/>
    <lineage>
        <taxon>Eukaryota</taxon>
        <taxon>Viridiplantae</taxon>
        <taxon>Streptophyta</taxon>
        <taxon>Embryophyta</taxon>
        <taxon>Tracheophyta</taxon>
        <taxon>Spermatophyta</taxon>
        <taxon>Magnoliopsida</taxon>
        <taxon>eudicotyledons</taxon>
        <taxon>Gunneridae</taxon>
        <taxon>Pentapetalae</taxon>
        <taxon>rosids</taxon>
        <taxon>malvids</taxon>
        <taxon>Sapindales</taxon>
        <taxon>Rutaceae</taxon>
        <taxon>Aurantioideae</taxon>
        <taxon>Citrus</taxon>
    </lineage>
</organism>
<accession>A0A067DKP1</accession>
<proteinExistence type="evidence at protein level"/>
<reference key="1">
    <citation type="journal article" date="2023" name="Science">
        <title>Complex scaffold remodeling in plant triterpene biosynthesis.</title>
        <authorList>
            <person name="De La Pena R."/>
            <person name="Hodgson H."/>
            <person name="Liu J.C."/>
            <person name="Stephenson M.J."/>
            <person name="Martin A.C."/>
            <person name="Owen C."/>
            <person name="Harkess A."/>
            <person name="Leebens-Mack J."/>
            <person name="Jimenez L.E."/>
            <person name="Osbourn A."/>
            <person name="Sattely E.S."/>
        </authorList>
    </citation>
    <scope>NUCLEOTIDE SEQUENCE [MRNA]</scope>
    <scope>FUNCTION</scope>
    <scope>CATALYTIC ACTIVITY</scope>
    <scope>PATHWAY</scope>
    <source>
        <strain>cv. Valencia</strain>
    </source>
</reference>
<reference key="2">
    <citation type="submission" date="2014-04" db="EMBL/GenBank/DDBJ databases">
        <authorList>
            <consortium name="International Citrus Genome Consortium"/>
            <person name="Gmitter F."/>
            <person name="Chen C."/>
            <person name="Farmerie W."/>
            <person name="Harkins T."/>
            <person name="Desany B."/>
            <person name="Mohiuddin M."/>
            <person name="Kodira C."/>
            <person name="Borodovsky M."/>
            <person name="Lomsadze A."/>
            <person name="Burns P."/>
            <person name="Jenkins J."/>
            <person name="Prochnik S."/>
            <person name="Shu S."/>
            <person name="Chapman J."/>
            <person name="Pitluck S."/>
            <person name="Schmutz J."/>
            <person name="Rokhsar D."/>
        </authorList>
    </citation>
    <scope>NUCLEOTIDE SEQUENCE [LARGE SCALE GENOMIC DNA]</scope>
    <source>
        <strain>cv. Ridge Pineapple sweet orange</strain>
    </source>
</reference>
<keyword id="KW-0012">Acyltransferase</keyword>
<keyword id="KW-1185">Reference proteome</keyword>
<keyword id="KW-0808">Transferase</keyword>
<protein>
    <recommendedName>
        <fullName evidence="3">Limonoid 1-O-acetyltransferse</fullName>
        <shortName evidence="3">CsL1AT</shortName>
        <ecNumber evidence="2">2.1.1.-</ecNumber>
    </recommendedName>
</protein>
<evidence type="ECO:0000250" key="1">
    <source>
        <dbReference type="UniProtKB" id="Q70PR7"/>
    </source>
</evidence>
<evidence type="ECO:0000269" key="2">
    <source>
    </source>
</evidence>
<evidence type="ECO:0000303" key="3">
    <source>
    </source>
</evidence>
<evidence type="ECO:0000305" key="4"/>
<evidence type="ECO:0000312" key="5">
    <source>
        <dbReference type="EMBL" id="KDO42120.1"/>
    </source>
</evidence>
<name>L1AT_CITSI</name>